<gene>
    <name type="ORF">RCOM_1506700</name>
</gene>
<evidence type="ECO:0000250" key="1"/>
<evidence type="ECO:0000305" key="2"/>
<comment type="function">
    <text evidence="1">Likely to play an important role in intracellular protein and peptide metabolism.</text>
</comment>
<comment type="catalytic activity">
    <reaction>
        <text>Release of an N-terminal aspartate or glutamate from a peptide, with a preference for aspartate.</text>
        <dbReference type="EC" id="3.4.11.21"/>
    </reaction>
</comment>
<comment type="cofactor">
    <cofactor evidence="1">
        <name>Zn(2+)</name>
        <dbReference type="ChEBI" id="CHEBI:29105"/>
    </cofactor>
    <text evidence="1">Binds 2 Zn(2+) ions per subunit.</text>
</comment>
<comment type="subunit">
    <text evidence="1">Tetrahedron-shaped homododecamer built from six homodimers.</text>
</comment>
<comment type="subcellular location">
    <subcellularLocation>
        <location evidence="1">Cytoplasm</location>
    </subcellularLocation>
</comment>
<comment type="similarity">
    <text evidence="2">Belongs to the peptidase M18 family.</text>
</comment>
<comment type="sequence caution" evidence="2">
    <conflict type="erroneous gene model prediction">
        <sequence resource="EMBL-CDS" id="EEF51817"/>
    </conflict>
</comment>
<comment type="sequence caution" evidence="2">
    <conflict type="frameshift">
        <sequence resource="EMBL" id="EV523896"/>
    </conflict>
</comment>
<dbReference type="EC" id="3.4.11.21"/>
<dbReference type="EMBL" id="EQ973773">
    <property type="protein sequence ID" value="EEF51817.1"/>
    <property type="status" value="ALT_SEQ"/>
    <property type="molecule type" value="Genomic_DNA"/>
</dbReference>
<dbReference type="EMBL" id="EV523896">
    <property type="status" value="NOT_ANNOTATED_CDS"/>
    <property type="molecule type" value="mRNA"/>
</dbReference>
<dbReference type="EMBL" id="GE636502">
    <property type="status" value="NOT_ANNOTATED_CDS"/>
    <property type="molecule type" value="mRNA"/>
</dbReference>
<dbReference type="SMR" id="B9RAJ0"/>
<dbReference type="FunCoup" id="B9RAJ0">
    <property type="interactions" value="3192"/>
</dbReference>
<dbReference type="STRING" id="3988.B9RAJ0"/>
<dbReference type="MEROPS" id="M18.A01"/>
<dbReference type="InParanoid" id="B9RAJ0"/>
<dbReference type="OMA" id="GPILKVN"/>
<dbReference type="OrthoDB" id="9880441at2759"/>
<dbReference type="Proteomes" id="UP000008311">
    <property type="component" value="Unassembled WGS sequence"/>
</dbReference>
<dbReference type="GO" id="GO:0005737">
    <property type="term" value="C:cytoplasm"/>
    <property type="evidence" value="ECO:0007669"/>
    <property type="project" value="UniProtKB-SubCell"/>
</dbReference>
<dbReference type="GO" id="GO:0004177">
    <property type="term" value="F:aminopeptidase activity"/>
    <property type="evidence" value="ECO:0007669"/>
    <property type="project" value="UniProtKB-KW"/>
</dbReference>
<dbReference type="GO" id="GO:0008237">
    <property type="term" value="F:metallopeptidase activity"/>
    <property type="evidence" value="ECO:0007669"/>
    <property type="project" value="UniProtKB-KW"/>
</dbReference>
<dbReference type="GO" id="GO:0008270">
    <property type="term" value="F:zinc ion binding"/>
    <property type="evidence" value="ECO:0007669"/>
    <property type="project" value="InterPro"/>
</dbReference>
<dbReference type="GO" id="GO:0006508">
    <property type="term" value="P:proteolysis"/>
    <property type="evidence" value="ECO:0007669"/>
    <property type="project" value="UniProtKB-KW"/>
</dbReference>
<dbReference type="CDD" id="cd05658">
    <property type="entry name" value="M18_DAP"/>
    <property type="match status" value="1"/>
</dbReference>
<dbReference type="FunFam" id="2.30.250.10:FF:000001">
    <property type="entry name" value="Aspartyl aminopeptidase 1"/>
    <property type="match status" value="1"/>
</dbReference>
<dbReference type="FunFam" id="3.40.630.10:FF:000003">
    <property type="entry name" value="Probable aspartyl aminopeptidase"/>
    <property type="match status" value="1"/>
</dbReference>
<dbReference type="Gene3D" id="2.30.250.10">
    <property type="entry name" value="Aminopeptidase i, Domain 2"/>
    <property type="match status" value="1"/>
</dbReference>
<dbReference type="Gene3D" id="3.40.630.10">
    <property type="entry name" value="Zn peptidases"/>
    <property type="match status" value="1"/>
</dbReference>
<dbReference type="InterPro" id="IPR001948">
    <property type="entry name" value="Peptidase_M18"/>
</dbReference>
<dbReference type="InterPro" id="IPR023358">
    <property type="entry name" value="Peptidase_M18_dom2"/>
</dbReference>
<dbReference type="NCBIfam" id="NF002759">
    <property type="entry name" value="PRK02813.1"/>
    <property type="match status" value="1"/>
</dbReference>
<dbReference type="PANTHER" id="PTHR28570">
    <property type="entry name" value="ASPARTYL AMINOPEPTIDASE"/>
    <property type="match status" value="1"/>
</dbReference>
<dbReference type="PANTHER" id="PTHR28570:SF16">
    <property type="entry name" value="ASPARTYL AMINOPEPTIDASE-RELATED"/>
    <property type="match status" value="1"/>
</dbReference>
<dbReference type="Pfam" id="PF02127">
    <property type="entry name" value="Peptidase_M18"/>
    <property type="match status" value="1"/>
</dbReference>
<dbReference type="PRINTS" id="PR00932">
    <property type="entry name" value="AMINO1PTASE"/>
</dbReference>
<dbReference type="SUPFAM" id="SSF101821">
    <property type="entry name" value="Aminopeptidase/glucanase lid domain"/>
    <property type="match status" value="1"/>
</dbReference>
<dbReference type="SUPFAM" id="SSF53187">
    <property type="entry name" value="Zn-dependent exopeptidases"/>
    <property type="match status" value="1"/>
</dbReference>
<proteinExistence type="evidence at transcript level"/>
<accession>B9RAJ0</accession>
<name>DNPEP_RICCO</name>
<organism>
    <name type="scientific">Ricinus communis</name>
    <name type="common">Castor bean</name>
    <dbReference type="NCBI Taxonomy" id="3988"/>
    <lineage>
        <taxon>Eukaryota</taxon>
        <taxon>Viridiplantae</taxon>
        <taxon>Streptophyta</taxon>
        <taxon>Embryophyta</taxon>
        <taxon>Tracheophyta</taxon>
        <taxon>Spermatophyta</taxon>
        <taxon>Magnoliopsida</taxon>
        <taxon>eudicotyledons</taxon>
        <taxon>Gunneridae</taxon>
        <taxon>Pentapetalae</taxon>
        <taxon>rosids</taxon>
        <taxon>fabids</taxon>
        <taxon>Malpighiales</taxon>
        <taxon>Euphorbiaceae</taxon>
        <taxon>Acalyphoideae</taxon>
        <taxon>Acalypheae</taxon>
        <taxon>Ricinus</taxon>
    </lineage>
</organism>
<keyword id="KW-0031">Aminopeptidase</keyword>
<keyword id="KW-0963">Cytoplasm</keyword>
<keyword id="KW-0378">Hydrolase</keyword>
<keyword id="KW-0479">Metal-binding</keyword>
<keyword id="KW-0482">Metalloprotease</keyword>
<keyword id="KW-0645">Protease</keyword>
<keyword id="KW-1185">Reference proteome</keyword>
<keyword id="KW-0862">Zinc</keyword>
<feature type="chain" id="PRO_0000416986" description="Probable aspartyl aminopeptidase">
    <location>
        <begin position="1"/>
        <end position="491"/>
    </location>
</feature>
<feature type="binding site" evidence="1">
    <location>
        <position position="90"/>
    </location>
    <ligand>
        <name>Zn(2+)</name>
        <dbReference type="ChEBI" id="CHEBI:29105"/>
        <label>1</label>
    </ligand>
</feature>
<feature type="binding site" evidence="1">
    <location>
        <position position="168"/>
    </location>
    <ligand>
        <name>substrate</name>
    </ligand>
</feature>
<feature type="binding site" evidence="1">
    <location>
        <position position="278"/>
    </location>
    <ligand>
        <name>Zn(2+)</name>
        <dbReference type="ChEBI" id="CHEBI:29105"/>
        <label>1</label>
    </ligand>
</feature>
<feature type="binding site" evidence="1">
    <location>
        <position position="278"/>
    </location>
    <ligand>
        <name>Zn(2+)</name>
        <dbReference type="ChEBI" id="CHEBI:29105"/>
        <label>2</label>
    </ligand>
</feature>
<feature type="binding site" evidence="1">
    <location>
        <position position="315"/>
    </location>
    <ligand>
        <name>substrate</name>
    </ligand>
</feature>
<feature type="binding site" evidence="1">
    <location>
        <position position="316"/>
    </location>
    <ligand>
        <name>Zn(2+)</name>
        <dbReference type="ChEBI" id="CHEBI:29105"/>
        <label>2</label>
    </ligand>
</feature>
<feature type="binding site" evidence="1">
    <location>
        <position position="361"/>
    </location>
    <ligand>
        <name>substrate</name>
    </ligand>
</feature>
<feature type="binding site" evidence="1">
    <location>
        <position position="361"/>
    </location>
    <ligand>
        <name>Zn(2+)</name>
        <dbReference type="ChEBI" id="CHEBI:29105"/>
        <label>1</label>
    </ligand>
</feature>
<feature type="binding site" evidence="1">
    <location>
        <position position="364"/>
    </location>
    <ligand>
        <name>substrate</name>
    </ligand>
</feature>
<feature type="binding site" evidence="1">
    <location>
        <position position="389"/>
    </location>
    <ligand>
        <name>substrate</name>
    </ligand>
</feature>
<feature type="binding site" evidence="1">
    <location>
        <position position="396"/>
    </location>
    <ligand>
        <name>substrate</name>
    </ligand>
</feature>
<feature type="binding site" evidence="1">
    <location>
        <position position="455"/>
    </location>
    <ligand>
        <name>Zn(2+)</name>
        <dbReference type="ChEBI" id="CHEBI:29105"/>
        <label>2</label>
    </ligand>
</feature>
<reference key="1">
    <citation type="journal article" date="2010" name="Nat. Biotechnol.">
        <title>Draft genome sequence of the oilseed species Ricinus communis.</title>
        <authorList>
            <person name="Chan A.P."/>
            <person name="Crabtree J."/>
            <person name="Zhao Q."/>
            <person name="Lorenzi H."/>
            <person name="Orvis J."/>
            <person name="Puiu D."/>
            <person name="Melake-Berhan A."/>
            <person name="Jones K.M."/>
            <person name="Redman J."/>
            <person name="Chen G."/>
            <person name="Cahoon E.B."/>
            <person name="Gedil M."/>
            <person name="Stanke M."/>
            <person name="Haas B.J."/>
            <person name="Wortman J.R."/>
            <person name="Fraser-Liggett C.M."/>
            <person name="Ravel J."/>
            <person name="Rabinowicz P.D."/>
        </authorList>
    </citation>
    <scope>NUCLEOTIDE SEQUENCE [LARGE SCALE GENOMIC DNA]</scope>
    <source>
        <strain>cv. Hale</strain>
    </source>
</reference>
<reference key="2">
    <citation type="journal article" date="2007" name="BMC Plant Biol.">
        <title>An analysis of expressed sequence tags of developing castor endosperm using a full-length cDNA library.</title>
        <authorList>
            <person name="Lu C."/>
            <person name="Wallis J.G."/>
            <person name="Browse J."/>
        </authorList>
    </citation>
    <scope>NUCLEOTIDE SEQUENCE [LARGE SCALE MRNA] OF 1-283</scope>
</reference>
<reference key="3">
    <citation type="submission" date="2008-11" db="EMBL/GenBank/DDBJ databases">
        <title>Genomic Resources for Castor Bean (Ricinus communis); Generation of a normalized cDNA library from developing castor seed and sequencing of Expressed Sequence Tags.</title>
        <authorList>
            <person name="Kroon J.T."/>
            <person name="Kunst L."/>
            <person name="Slabas A.R."/>
            <person name="Smith M.A."/>
        </authorList>
    </citation>
    <scope>NUCLEOTIDE SEQUENCE [LARGE SCALE MRNA] OF 36-302</scope>
</reference>
<sequence>MAKQDSQTEGISIDSDLINFLNASPTAFHAIDEAKKRLKHSGYVQVSERDDWKLELGKRYFFTRNHSTIVAFAIGKKYVAGNGFYVVGAHTDSPCIKLKPVSKVTKSGYLEVGVQPYGGGLWHTWFDRDLAVAGRVIVREEKHGSVSYSHRLVRIEEPIMRVPTLAIHLDRNVNTDGFKVNTQSHLLPVLATSVKAELSKVVAENGTVGNDEETDGMKSSKGTTNANSKHHSLLLQMIAGQIGCNGSDICDFELQACDTQPSVIAGAAKEFIFSGRLDNLCMSFCSLKALIDATASDSHLENESGVRMVALFDHEEVGSDSAQGAGSPVMFDALSRITSTFNSDSKLLRKAIQKSFLVSADMAHALHPNYADKHEENHQPRMHGGLVIKHNANQRYATNSVTSFLFKEIASKHNLPVQDFVVRNDMPCGSTIGPILASGVGIRTVDVGAPQLSMHSIREMCAVDDVKYSYEHFKAFFEDFSHLDSKITVDM</sequence>
<protein>
    <recommendedName>
        <fullName>Probable aspartyl aminopeptidase</fullName>
        <ecNumber>3.4.11.21</ecNumber>
    </recommendedName>
</protein>